<name>RL30_SHEWM</name>
<organism>
    <name type="scientific">Shewanella woodyi (strain ATCC 51908 / MS32)</name>
    <dbReference type="NCBI Taxonomy" id="392500"/>
    <lineage>
        <taxon>Bacteria</taxon>
        <taxon>Pseudomonadati</taxon>
        <taxon>Pseudomonadota</taxon>
        <taxon>Gammaproteobacteria</taxon>
        <taxon>Alteromonadales</taxon>
        <taxon>Shewanellaceae</taxon>
        <taxon>Shewanella</taxon>
    </lineage>
</organism>
<accession>B1KMW5</accession>
<reference key="1">
    <citation type="submission" date="2008-02" db="EMBL/GenBank/DDBJ databases">
        <title>Complete sequence of Shewanella woodyi ATCC 51908.</title>
        <authorList>
            <consortium name="US DOE Joint Genome Institute"/>
            <person name="Copeland A."/>
            <person name="Lucas S."/>
            <person name="Lapidus A."/>
            <person name="Glavina del Rio T."/>
            <person name="Dalin E."/>
            <person name="Tice H."/>
            <person name="Bruce D."/>
            <person name="Goodwin L."/>
            <person name="Pitluck S."/>
            <person name="Sims D."/>
            <person name="Brettin T."/>
            <person name="Detter J.C."/>
            <person name="Han C."/>
            <person name="Kuske C.R."/>
            <person name="Schmutz J."/>
            <person name="Larimer F."/>
            <person name="Land M."/>
            <person name="Hauser L."/>
            <person name="Kyrpides N."/>
            <person name="Lykidis A."/>
            <person name="Zhao J.-S."/>
            <person name="Richardson P."/>
        </authorList>
    </citation>
    <scope>NUCLEOTIDE SEQUENCE [LARGE SCALE GENOMIC DNA]</scope>
    <source>
        <strain>ATCC 51908 / MS32</strain>
    </source>
</reference>
<sequence length="60" mass="6768">MATKTIKVTQTKSSIGRLPKHRASLLGLGLRRINHTVEVEDTPSVRGMINKVYYMVKVED</sequence>
<protein>
    <recommendedName>
        <fullName evidence="1">Large ribosomal subunit protein uL30</fullName>
    </recommendedName>
    <alternativeName>
        <fullName evidence="2">50S ribosomal protein L30</fullName>
    </alternativeName>
</protein>
<dbReference type="EMBL" id="CP000961">
    <property type="protein sequence ID" value="ACA88922.1"/>
    <property type="molecule type" value="Genomic_DNA"/>
</dbReference>
<dbReference type="RefSeq" id="WP_012327245.1">
    <property type="nucleotide sequence ID" value="NC_010506.1"/>
</dbReference>
<dbReference type="SMR" id="B1KMW5"/>
<dbReference type="STRING" id="392500.Swoo_4672"/>
<dbReference type="KEGG" id="swd:Swoo_4672"/>
<dbReference type="eggNOG" id="COG1841">
    <property type="taxonomic scope" value="Bacteria"/>
</dbReference>
<dbReference type="HOGENOM" id="CLU_131047_1_4_6"/>
<dbReference type="Proteomes" id="UP000002168">
    <property type="component" value="Chromosome"/>
</dbReference>
<dbReference type="GO" id="GO:0022625">
    <property type="term" value="C:cytosolic large ribosomal subunit"/>
    <property type="evidence" value="ECO:0007669"/>
    <property type="project" value="TreeGrafter"/>
</dbReference>
<dbReference type="GO" id="GO:0003735">
    <property type="term" value="F:structural constituent of ribosome"/>
    <property type="evidence" value="ECO:0007669"/>
    <property type="project" value="InterPro"/>
</dbReference>
<dbReference type="GO" id="GO:0006412">
    <property type="term" value="P:translation"/>
    <property type="evidence" value="ECO:0007669"/>
    <property type="project" value="UniProtKB-UniRule"/>
</dbReference>
<dbReference type="CDD" id="cd01658">
    <property type="entry name" value="Ribosomal_L30"/>
    <property type="match status" value="1"/>
</dbReference>
<dbReference type="FunFam" id="3.30.1390.20:FF:000001">
    <property type="entry name" value="50S ribosomal protein L30"/>
    <property type="match status" value="1"/>
</dbReference>
<dbReference type="Gene3D" id="3.30.1390.20">
    <property type="entry name" value="Ribosomal protein L30, ferredoxin-like fold domain"/>
    <property type="match status" value="1"/>
</dbReference>
<dbReference type="HAMAP" id="MF_01371_B">
    <property type="entry name" value="Ribosomal_uL30_B"/>
    <property type="match status" value="1"/>
</dbReference>
<dbReference type="InterPro" id="IPR036919">
    <property type="entry name" value="Ribo_uL30_ferredoxin-like_sf"/>
</dbReference>
<dbReference type="InterPro" id="IPR005996">
    <property type="entry name" value="Ribosomal_uL30_bac-type"/>
</dbReference>
<dbReference type="InterPro" id="IPR018038">
    <property type="entry name" value="Ribosomal_uL30_CS"/>
</dbReference>
<dbReference type="InterPro" id="IPR016082">
    <property type="entry name" value="Ribosomal_uL30_ferredoxin-like"/>
</dbReference>
<dbReference type="NCBIfam" id="TIGR01308">
    <property type="entry name" value="rpmD_bact"/>
    <property type="match status" value="1"/>
</dbReference>
<dbReference type="PANTHER" id="PTHR15892:SF2">
    <property type="entry name" value="LARGE RIBOSOMAL SUBUNIT PROTEIN UL30M"/>
    <property type="match status" value="1"/>
</dbReference>
<dbReference type="PANTHER" id="PTHR15892">
    <property type="entry name" value="MITOCHONDRIAL RIBOSOMAL PROTEIN L30"/>
    <property type="match status" value="1"/>
</dbReference>
<dbReference type="Pfam" id="PF00327">
    <property type="entry name" value="Ribosomal_L30"/>
    <property type="match status" value="1"/>
</dbReference>
<dbReference type="PIRSF" id="PIRSF002211">
    <property type="entry name" value="Ribosomal_L30_bac-type"/>
    <property type="match status" value="1"/>
</dbReference>
<dbReference type="SUPFAM" id="SSF55129">
    <property type="entry name" value="Ribosomal protein L30p/L7e"/>
    <property type="match status" value="1"/>
</dbReference>
<dbReference type="PROSITE" id="PS00634">
    <property type="entry name" value="RIBOSOMAL_L30"/>
    <property type="match status" value="1"/>
</dbReference>
<feature type="chain" id="PRO_1000144719" description="Large ribosomal subunit protein uL30">
    <location>
        <begin position="1"/>
        <end position="60"/>
    </location>
</feature>
<evidence type="ECO:0000255" key="1">
    <source>
        <dbReference type="HAMAP-Rule" id="MF_01371"/>
    </source>
</evidence>
<evidence type="ECO:0000305" key="2"/>
<keyword id="KW-1185">Reference proteome</keyword>
<keyword id="KW-0687">Ribonucleoprotein</keyword>
<keyword id="KW-0689">Ribosomal protein</keyword>
<comment type="subunit">
    <text evidence="1">Part of the 50S ribosomal subunit.</text>
</comment>
<comment type="similarity">
    <text evidence="1">Belongs to the universal ribosomal protein uL30 family.</text>
</comment>
<proteinExistence type="inferred from homology"/>
<gene>
    <name evidence="1" type="primary">rpmD</name>
    <name type="ordered locus">Swoo_4672</name>
</gene>